<keyword id="KW-1185">Reference proteome</keyword>
<evidence type="ECO:0000255" key="1">
    <source>
        <dbReference type="PROSITE-ProRule" id="PRU00864"/>
    </source>
</evidence>
<evidence type="ECO:0000305" key="2"/>
<proteinExistence type="evidence at transcript level"/>
<reference key="1">
    <citation type="journal article" date="2000" name="Science">
        <title>The genome sequence of Drosophila melanogaster.</title>
        <authorList>
            <person name="Adams M.D."/>
            <person name="Celniker S.E."/>
            <person name="Holt R.A."/>
            <person name="Evans C.A."/>
            <person name="Gocayne J.D."/>
            <person name="Amanatides P.G."/>
            <person name="Scherer S.E."/>
            <person name="Li P.W."/>
            <person name="Hoskins R.A."/>
            <person name="Galle R.F."/>
            <person name="George R.A."/>
            <person name="Lewis S.E."/>
            <person name="Richards S."/>
            <person name="Ashburner M."/>
            <person name="Henderson S.N."/>
            <person name="Sutton G.G."/>
            <person name="Wortman J.R."/>
            <person name="Yandell M.D."/>
            <person name="Zhang Q."/>
            <person name="Chen L.X."/>
            <person name="Brandon R.C."/>
            <person name="Rogers Y.-H.C."/>
            <person name="Blazej R.G."/>
            <person name="Champe M."/>
            <person name="Pfeiffer B.D."/>
            <person name="Wan K.H."/>
            <person name="Doyle C."/>
            <person name="Baxter E.G."/>
            <person name="Helt G."/>
            <person name="Nelson C.R."/>
            <person name="Miklos G.L.G."/>
            <person name="Abril J.F."/>
            <person name="Agbayani A."/>
            <person name="An H.-J."/>
            <person name="Andrews-Pfannkoch C."/>
            <person name="Baldwin D."/>
            <person name="Ballew R.M."/>
            <person name="Basu A."/>
            <person name="Baxendale J."/>
            <person name="Bayraktaroglu L."/>
            <person name="Beasley E.M."/>
            <person name="Beeson K.Y."/>
            <person name="Benos P.V."/>
            <person name="Berman B.P."/>
            <person name="Bhandari D."/>
            <person name="Bolshakov S."/>
            <person name="Borkova D."/>
            <person name="Botchan M.R."/>
            <person name="Bouck J."/>
            <person name="Brokstein P."/>
            <person name="Brottier P."/>
            <person name="Burtis K.C."/>
            <person name="Busam D.A."/>
            <person name="Butler H."/>
            <person name="Cadieu E."/>
            <person name="Center A."/>
            <person name="Chandra I."/>
            <person name="Cherry J.M."/>
            <person name="Cawley S."/>
            <person name="Dahlke C."/>
            <person name="Davenport L.B."/>
            <person name="Davies P."/>
            <person name="de Pablos B."/>
            <person name="Delcher A."/>
            <person name="Deng Z."/>
            <person name="Mays A.D."/>
            <person name="Dew I."/>
            <person name="Dietz S.M."/>
            <person name="Dodson K."/>
            <person name="Doup L.E."/>
            <person name="Downes M."/>
            <person name="Dugan-Rocha S."/>
            <person name="Dunkov B.C."/>
            <person name="Dunn P."/>
            <person name="Durbin K.J."/>
            <person name="Evangelista C.C."/>
            <person name="Ferraz C."/>
            <person name="Ferriera S."/>
            <person name="Fleischmann W."/>
            <person name="Fosler C."/>
            <person name="Gabrielian A.E."/>
            <person name="Garg N.S."/>
            <person name="Gelbart W.M."/>
            <person name="Glasser K."/>
            <person name="Glodek A."/>
            <person name="Gong F."/>
            <person name="Gorrell J.H."/>
            <person name="Gu Z."/>
            <person name="Guan P."/>
            <person name="Harris M."/>
            <person name="Harris N.L."/>
            <person name="Harvey D.A."/>
            <person name="Heiman T.J."/>
            <person name="Hernandez J.R."/>
            <person name="Houck J."/>
            <person name="Hostin D."/>
            <person name="Houston K.A."/>
            <person name="Howland T.J."/>
            <person name="Wei M.-H."/>
            <person name="Ibegwam C."/>
            <person name="Jalali M."/>
            <person name="Kalush F."/>
            <person name="Karpen G.H."/>
            <person name="Ke Z."/>
            <person name="Kennison J.A."/>
            <person name="Ketchum K.A."/>
            <person name="Kimmel B.E."/>
            <person name="Kodira C.D."/>
            <person name="Kraft C.L."/>
            <person name="Kravitz S."/>
            <person name="Kulp D."/>
            <person name="Lai Z."/>
            <person name="Lasko P."/>
            <person name="Lei Y."/>
            <person name="Levitsky A.A."/>
            <person name="Li J.H."/>
            <person name="Li Z."/>
            <person name="Liang Y."/>
            <person name="Lin X."/>
            <person name="Liu X."/>
            <person name="Mattei B."/>
            <person name="McIntosh T.C."/>
            <person name="McLeod M.P."/>
            <person name="McPherson D."/>
            <person name="Merkulov G."/>
            <person name="Milshina N.V."/>
            <person name="Mobarry C."/>
            <person name="Morris J."/>
            <person name="Moshrefi A."/>
            <person name="Mount S.M."/>
            <person name="Moy M."/>
            <person name="Murphy B."/>
            <person name="Murphy L."/>
            <person name="Muzny D.M."/>
            <person name="Nelson D.L."/>
            <person name="Nelson D.R."/>
            <person name="Nelson K.A."/>
            <person name="Nixon K."/>
            <person name="Nusskern D.R."/>
            <person name="Pacleb J.M."/>
            <person name="Palazzolo M."/>
            <person name="Pittman G.S."/>
            <person name="Pan S."/>
            <person name="Pollard J."/>
            <person name="Puri V."/>
            <person name="Reese M.G."/>
            <person name="Reinert K."/>
            <person name="Remington K."/>
            <person name="Saunders R.D.C."/>
            <person name="Scheeler F."/>
            <person name="Shen H."/>
            <person name="Shue B.C."/>
            <person name="Siden-Kiamos I."/>
            <person name="Simpson M."/>
            <person name="Skupski M.P."/>
            <person name="Smith T.J."/>
            <person name="Spier E."/>
            <person name="Spradling A.C."/>
            <person name="Stapleton M."/>
            <person name="Strong R."/>
            <person name="Sun E."/>
            <person name="Svirskas R."/>
            <person name="Tector C."/>
            <person name="Turner R."/>
            <person name="Venter E."/>
            <person name="Wang A.H."/>
            <person name="Wang X."/>
            <person name="Wang Z.-Y."/>
            <person name="Wassarman D.A."/>
            <person name="Weinstock G.M."/>
            <person name="Weissenbach J."/>
            <person name="Williams S.M."/>
            <person name="Woodage T."/>
            <person name="Worley K.C."/>
            <person name="Wu D."/>
            <person name="Yang S."/>
            <person name="Yao Q.A."/>
            <person name="Ye J."/>
            <person name="Yeh R.-F."/>
            <person name="Zaveri J.S."/>
            <person name="Zhan M."/>
            <person name="Zhang G."/>
            <person name="Zhao Q."/>
            <person name="Zheng L."/>
            <person name="Zheng X.H."/>
            <person name="Zhong F.N."/>
            <person name="Zhong W."/>
            <person name="Zhou X."/>
            <person name="Zhu S.C."/>
            <person name="Zhu X."/>
            <person name="Smith H.O."/>
            <person name="Gibbs R.A."/>
            <person name="Myers E.W."/>
            <person name="Rubin G.M."/>
            <person name="Venter J.C."/>
        </authorList>
    </citation>
    <scope>NUCLEOTIDE SEQUENCE [LARGE SCALE GENOMIC DNA]</scope>
    <source>
        <strain>Berkeley</strain>
    </source>
</reference>
<reference key="2">
    <citation type="journal article" date="2002" name="Genome Biol.">
        <title>Annotation of the Drosophila melanogaster euchromatic genome: a systematic review.</title>
        <authorList>
            <person name="Misra S."/>
            <person name="Crosby M.A."/>
            <person name="Mungall C.J."/>
            <person name="Matthews B.B."/>
            <person name="Campbell K.S."/>
            <person name="Hradecky P."/>
            <person name="Huang Y."/>
            <person name="Kaminker J.S."/>
            <person name="Millburn G.H."/>
            <person name="Prochnik S.E."/>
            <person name="Smith C.D."/>
            <person name="Tupy J.L."/>
            <person name="Whitfield E.J."/>
            <person name="Bayraktaroglu L."/>
            <person name="Berman B.P."/>
            <person name="Bettencourt B.R."/>
            <person name="Celniker S.E."/>
            <person name="de Grey A.D.N.J."/>
            <person name="Drysdale R.A."/>
            <person name="Harris N.L."/>
            <person name="Richter J."/>
            <person name="Russo S."/>
            <person name="Schroeder A.J."/>
            <person name="Shu S.Q."/>
            <person name="Stapleton M."/>
            <person name="Yamada C."/>
            <person name="Ashburner M."/>
            <person name="Gelbart W.M."/>
            <person name="Rubin G.M."/>
            <person name="Lewis S.E."/>
        </authorList>
    </citation>
    <scope>GENOME REANNOTATION</scope>
    <source>
        <strain>Berkeley</strain>
    </source>
</reference>
<reference key="3">
    <citation type="journal article" date="2002" name="Genome Biol.">
        <title>A Drosophila full-length cDNA resource.</title>
        <authorList>
            <person name="Stapleton M."/>
            <person name="Carlson J.W."/>
            <person name="Brokstein P."/>
            <person name="Yu C."/>
            <person name="Champe M."/>
            <person name="George R.A."/>
            <person name="Guarin H."/>
            <person name="Kronmiller B."/>
            <person name="Pacleb J.M."/>
            <person name="Park S."/>
            <person name="Wan K.H."/>
            <person name="Rubin G.M."/>
            <person name="Celniker S.E."/>
        </authorList>
    </citation>
    <scope>NUCLEOTIDE SEQUENCE [LARGE SCALE MRNA]</scope>
    <source>
        <strain>Berkeley</strain>
        <tissue>Ovary</tissue>
    </source>
</reference>
<feature type="chain" id="PRO_0000285036" description="PITH domain-containing protein CG6153">
    <location>
        <begin position="1"/>
        <end position="211"/>
    </location>
</feature>
<feature type="domain" description="PITH" evidence="1">
    <location>
        <begin position="20"/>
        <end position="192"/>
    </location>
</feature>
<accession>Q9VK68</accession>
<accession>Q7K2H3</accession>
<gene>
    <name type="ORF">CG6153</name>
</gene>
<dbReference type="EMBL" id="AE014134">
    <property type="protein sequence ID" value="AAF53211.1"/>
    <property type="molecule type" value="Genomic_DNA"/>
</dbReference>
<dbReference type="EMBL" id="AY060988">
    <property type="protein sequence ID" value="AAL28536.2"/>
    <property type="status" value="ALT_INIT"/>
    <property type="molecule type" value="mRNA"/>
</dbReference>
<dbReference type="RefSeq" id="NP_001162966.2">
    <property type="nucleotide sequence ID" value="NM_001169495.2"/>
</dbReference>
<dbReference type="RefSeq" id="NP_609580.1">
    <property type="nucleotide sequence ID" value="NM_135736.4"/>
</dbReference>
<dbReference type="SMR" id="Q9VK68"/>
<dbReference type="BioGRID" id="60719">
    <property type="interactions" value="1"/>
</dbReference>
<dbReference type="FunCoup" id="Q9VK68">
    <property type="interactions" value="2270"/>
</dbReference>
<dbReference type="STRING" id="7227.FBpp0309440"/>
<dbReference type="PaxDb" id="7227-FBpp0289503"/>
<dbReference type="DNASU" id="34675"/>
<dbReference type="EnsemblMetazoa" id="FBtr0080394">
    <property type="protein sequence ID" value="FBpp0079975"/>
    <property type="gene ID" value="FBgn0032445"/>
</dbReference>
<dbReference type="EnsemblMetazoa" id="FBtr0340541">
    <property type="protein sequence ID" value="FBpp0309440"/>
    <property type="gene ID" value="FBgn0032445"/>
</dbReference>
<dbReference type="GeneID" id="34675"/>
<dbReference type="KEGG" id="dme:Dmel_CG6153"/>
<dbReference type="UCSC" id="CG6153-RA">
    <property type="organism name" value="d. melanogaster"/>
</dbReference>
<dbReference type="AGR" id="FB:FBgn0032445"/>
<dbReference type="FlyBase" id="FBgn0032445">
    <property type="gene designation" value="CG6153"/>
</dbReference>
<dbReference type="VEuPathDB" id="VectorBase:FBgn0032445"/>
<dbReference type="eggNOG" id="KOG1730">
    <property type="taxonomic scope" value="Eukaryota"/>
</dbReference>
<dbReference type="GeneTree" id="ENSGT00490000043398"/>
<dbReference type="HOGENOM" id="CLU_072377_2_0_1"/>
<dbReference type="InParanoid" id="Q9VK68"/>
<dbReference type="OMA" id="RLVFKPW"/>
<dbReference type="OrthoDB" id="2635at2759"/>
<dbReference type="PhylomeDB" id="Q9VK68"/>
<dbReference type="BioGRID-ORCS" id="34675">
    <property type="hits" value="0 hits in 1 CRISPR screen"/>
</dbReference>
<dbReference type="GenomeRNAi" id="34675"/>
<dbReference type="PRO" id="PR:Q9VK68"/>
<dbReference type="Proteomes" id="UP000000803">
    <property type="component" value="Chromosome 2L"/>
</dbReference>
<dbReference type="Bgee" id="FBgn0032445">
    <property type="expression patterns" value="Expressed in mid-late elongation-stage spermatid (Drosophila) in testis and 57 other cell types or tissues"/>
</dbReference>
<dbReference type="ExpressionAtlas" id="Q9VK68">
    <property type="expression patterns" value="baseline and differential"/>
</dbReference>
<dbReference type="GO" id="GO:0005737">
    <property type="term" value="C:cytoplasm"/>
    <property type="evidence" value="ECO:0007669"/>
    <property type="project" value="UniProtKB-ARBA"/>
</dbReference>
<dbReference type="GO" id="GO:0005634">
    <property type="term" value="C:nucleus"/>
    <property type="evidence" value="ECO:0000318"/>
    <property type="project" value="GO_Central"/>
</dbReference>
<dbReference type="FunFam" id="2.60.120.470:FF:000002">
    <property type="entry name" value="PITH domain-containing protein 1"/>
    <property type="match status" value="1"/>
</dbReference>
<dbReference type="Gene3D" id="2.60.120.470">
    <property type="entry name" value="PITH domain"/>
    <property type="match status" value="1"/>
</dbReference>
<dbReference type="InterPro" id="IPR008979">
    <property type="entry name" value="Galactose-bd-like_sf"/>
</dbReference>
<dbReference type="InterPro" id="IPR045099">
    <property type="entry name" value="PITH1-like"/>
</dbReference>
<dbReference type="InterPro" id="IPR010400">
    <property type="entry name" value="PITH_dom"/>
</dbReference>
<dbReference type="InterPro" id="IPR037047">
    <property type="entry name" value="PITH_dom_sf"/>
</dbReference>
<dbReference type="PANTHER" id="PTHR12175">
    <property type="entry name" value="AD039 HT014 THIOREDOXIN FAMILY TRP26"/>
    <property type="match status" value="1"/>
</dbReference>
<dbReference type="PANTHER" id="PTHR12175:SF1">
    <property type="entry name" value="PITH DOMAIN-CONTAINING PROTEIN 1"/>
    <property type="match status" value="1"/>
</dbReference>
<dbReference type="Pfam" id="PF06201">
    <property type="entry name" value="PITH"/>
    <property type="match status" value="1"/>
</dbReference>
<dbReference type="SUPFAM" id="SSF49785">
    <property type="entry name" value="Galactose-binding domain-like"/>
    <property type="match status" value="1"/>
</dbReference>
<dbReference type="PROSITE" id="PS51532">
    <property type="entry name" value="PITH"/>
    <property type="match status" value="1"/>
</dbReference>
<organism>
    <name type="scientific">Drosophila melanogaster</name>
    <name type="common">Fruit fly</name>
    <dbReference type="NCBI Taxonomy" id="7227"/>
    <lineage>
        <taxon>Eukaryota</taxon>
        <taxon>Metazoa</taxon>
        <taxon>Ecdysozoa</taxon>
        <taxon>Arthropoda</taxon>
        <taxon>Hexapoda</taxon>
        <taxon>Insecta</taxon>
        <taxon>Pterygota</taxon>
        <taxon>Neoptera</taxon>
        <taxon>Endopterygota</taxon>
        <taxon>Diptera</taxon>
        <taxon>Brachycera</taxon>
        <taxon>Muscomorpha</taxon>
        <taxon>Ephydroidea</taxon>
        <taxon>Drosophilidae</taxon>
        <taxon>Drosophila</taxon>
        <taxon>Sophophora</taxon>
    </lineage>
</organism>
<sequence length="211" mass="23917">MPHGHSHDHGGCSHEASDVDHALEMGIEYSLYTKIDLDNVECLNEETDGQGKSVFKPYEKRQDLSKYVESDADEELLFNIPFTGNIKLKGIIISGANDDSHPNMVKIFKNRPRMTFDDARAKPDQEFQLTRDARGEIEYSPKVVTFSSVHHLSLYFPSNFGEDITRIYYIGLRGEFTEAHYHGVTICNYESRANAADHKEKAFDGVGRAIQ</sequence>
<protein>
    <recommendedName>
        <fullName>PITH domain-containing protein CG6153</fullName>
    </recommendedName>
</protein>
<name>PITH1_DROME</name>
<comment type="similarity">
    <text evidence="2">Belongs to the PITHD1 family.</text>
</comment>
<comment type="sequence caution" evidence="2">
    <conflict type="erroneous initiation">
        <sequence resource="EMBL-CDS" id="AAL28536"/>
    </conflict>
</comment>